<feature type="chain" id="PRO_1000010671" description="Elongation factor P">
    <location>
        <begin position="1"/>
        <end position="188"/>
    </location>
</feature>
<sequence>MKTAQEIRAGNVVMIGTEPMVVQKAEFNKSGRNSAVVKMKLKGLLNGSATETVFKADDKLEVVQLERKECTYSYFSDPLYVFMDTEYNQYDVEKDNLGDALNYMVDGMEDICEVTFYNEKAISVELPTTIVREVEYTEPAARGDTSGKVTKPARLKGTTYELAVAAFVEIGDKIEIDTRTGEFKRRVN</sequence>
<keyword id="KW-0963">Cytoplasm</keyword>
<keyword id="KW-0251">Elongation factor</keyword>
<keyword id="KW-0648">Protein biosynthesis</keyword>
<keyword id="KW-1185">Reference proteome</keyword>
<dbReference type="EMBL" id="CP000462">
    <property type="protein sequence ID" value="ABK37172.1"/>
    <property type="molecule type" value="Genomic_DNA"/>
</dbReference>
<dbReference type="RefSeq" id="WP_011707002.1">
    <property type="nucleotide sequence ID" value="NC_008570.1"/>
</dbReference>
<dbReference type="RefSeq" id="YP_857718.1">
    <property type="nucleotide sequence ID" value="NC_008570.1"/>
</dbReference>
<dbReference type="SMR" id="A0KN67"/>
<dbReference type="STRING" id="380703.AHA_3227"/>
<dbReference type="EnsemblBacteria" id="ABK37172">
    <property type="protein sequence ID" value="ABK37172"/>
    <property type="gene ID" value="AHA_3227"/>
</dbReference>
<dbReference type="GeneID" id="89581945"/>
<dbReference type="KEGG" id="aha:AHA_3227"/>
<dbReference type="PATRIC" id="fig|380703.7.peg.3222"/>
<dbReference type="eggNOG" id="COG0231">
    <property type="taxonomic scope" value="Bacteria"/>
</dbReference>
<dbReference type="HOGENOM" id="CLU_074944_2_1_6"/>
<dbReference type="OrthoDB" id="9801844at2"/>
<dbReference type="UniPathway" id="UPA00345"/>
<dbReference type="Proteomes" id="UP000000756">
    <property type="component" value="Chromosome"/>
</dbReference>
<dbReference type="GO" id="GO:0005737">
    <property type="term" value="C:cytoplasm"/>
    <property type="evidence" value="ECO:0007669"/>
    <property type="project" value="UniProtKB-SubCell"/>
</dbReference>
<dbReference type="GO" id="GO:0003746">
    <property type="term" value="F:translation elongation factor activity"/>
    <property type="evidence" value="ECO:0007669"/>
    <property type="project" value="UniProtKB-UniRule"/>
</dbReference>
<dbReference type="GO" id="GO:0043043">
    <property type="term" value="P:peptide biosynthetic process"/>
    <property type="evidence" value="ECO:0007669"/>
    <property type="project" value="InterPro"/>
</dbReference>
<dbReference type="CDD" id="cd04470">
    <property type="entry name" value="S1_EF-P_repeat_1"/>
    <property type="match status" value="1"/>
</dbReference>
<dbReference type="FunFam" id="2.30.30.30:FF:000003">
    <property type="entry name" value="Elongation factor P"/>
    <property type="match status" value="1"/>
</dbReference>
<dbReference type="FunFam" id="2.40.50.140:FF:000004">
    <property type="entry name" value="Elongation factor P"/>
    <property type="match status" value="1"/>
</dbReference>
<dbReference type="FunFam" id="2.40.50.140:FF:000009">
    <property type="entry name" value="Elongation factor P"/>
    <property type="match status" value="1"/>
</dbReference>
<dbReference type="Gene3D" id="2.30.30.30">
    <property type="match status" value="1"/>
</dbReference>
<dbReference type="Gene3D" id="2.40.50.140">
    <property type="entry name" value="Nucleic acid-binding proteins"/>
    <property type="match status" value="2"/>
</dbReference>
<dbReference type="HAMAP" id="MF_00141">
    <property type="entry name" value="EF_P"/>
    <property type="match status" value="1"/>
</dbReference>
<dbReference type="InterPro" id="IPR015365">
    <property type="entry name" value="Elong-fact-P_C"/>
</dbReference>
<dbReference type="InterPro" id="IPR012340">
    <property type="entry name" value="NA-bd_OB-fold"/>
</dbReference>
<dbReference type="InterPro" id="IPR014722">
    <property type="entry name" value="Rib_uL2_dom2"/>
</dbReference>
<dbReference type="InterPro" id="IPR020599">
    <property type="entry name" value="Transl_elong_fac_P/YeiP"/>
</dbReference>
<dbReference type="InterPro" id="IPR013185">
    <property type="entry name" value="Transl_elong_KOW-like"/>
</dbReference>
<dbReference type="InterPro" id="IPR001059">
    <property type="entry name" value="Transl_elong_P/YeiP_cen"/>
</dbReference>
<dbReference type="InterPro" id="IPR011768">
    <property type="entry name" value="Transl_elongation_fac_P"/>
</dbReference>
<dbReference type="InterPro" id="IPR008991">
    <property type="entry name" value="Translation_prot_SH3-like_sf"/>
</dbReference>
<dbReference type="NCBIfam" id="TIGR00038">
    <property type="entry name" value="efp"/>
    <property type="match status" value="1"/>
</dbReference>
<dbReference type="NCBIfam" id="NF001810">
    <property type="entry name" value="PRK00529.1"/>
    <property type="match status" value="1"/>
</dbReference>
<dbReference type="PANTHER" id="PTHR30053">
    <property type="entry name" value="ELONGATION FACTOR P"/>
    <property type="match status" value="1"/>
</dbReference>
<dbReference type="PANTHER" id="PTHR30053:SF12">
    <property type="entry name" value="ELONGATION FACTOR P (EF-P) FAMILY PROTEIN"/>
    <property type="match status" value="1"/>
</dbReference>
<dbReference type="Pfam" id="PF01132">
    <property type="entry name" value="EFP"/>
    <property type="match status" value="1"/>
</dbReference>
<dbReference type="Pfam" id="PF08207">
    <property type="entry name" value="EFP_N"/>
    <property type="match status" value="1"/>
</dbReference>
<dbReference type="Pfam" id="PF09285">
    <property type="entry name" value="Elong-fact-P_C"/>
    <property type="match status" value="1"/>
</dbReference>
<dbReference type="PIRSF" id="PIRSF005901">
    <property type="entry name" value="EF-P"/>
    <property type="match status" value="1"/>
</dbReference>
<dbReference type="SMART" id="SM01185">
    <property type="entry name" value="EFP"/>
    <property type="match status" value="1"/>
</dbReference>
<dbReference type="SMART" id="SM00841">
    <property type="entry name" value="Elong-fact-P_C"/>
    <property type="match status" value="1"/>
</dbReference>
<dbReference type="SUPFAM" id="SSF50249">
    <property type="entry name" value="Nucleic acid-binding proteins"/>
    <property type="match status" value="2"/>
</dbReference>
<dbReference type="SUPFAM" id="SSF50104">
    <property type="entry name" value="Translation proteins SH3-like domain"/>
    <property type="match status" value="1"/>
</dbReference>
<accession>A0KN67</accession>
<protein>
    <recommendedName>
        <fullName evidence="1">Elongation factor P</fullName>
        <shortName evidence="1">EF-P</shortName>
    </recommendedName>
</protein>
<reference key="1">
    <citation type="journal article" date="2006" name="J. Bacteriol.">
        <title>Genome sequence of Aeromonas hydrophila ATCC 7966T: jack of all trades.</title>
        <authorList>
            <person name="Seshadri R."/>
            <person name="Joseph S.W."/>
            <person name="Chopra A.K."/>
            <person name="Sha J."/>
            <person name="Shaw J."/>
            <person name="Graf J."/>
            <person name="Haft D.H."/>
            <person name="Wu M."/>
            <person name="Ren Q."/>
            <person name="Rosovitz M.J."/>
            <person name="Madupu R."/>
            <person name="Tallon L."/>
            <person name="Kim M."/>
            <person name="Jin S."/>
            <person name="Vuong H."/>
            <person name="Stine O.C."/>
            <person name="Ali A."/>
            <person name="Horneman A.J."/>
            <person name="Heidelberg J.F."/>
        </authorList>
    </citation>
    <scope>NUCLEOTIDE SEQUENCE [LARGE SCALE GENOMIC DNA]</scope>
    <source>
        <strain>ATCC 7966 / DSM 30187 / BCRC 13018 / CCUG 14551 / JCM 1027 / KCTC 2358 / NCIMB 9240 / NCTC 8049</strain>
    </source>
</reference>
<gene>
    <name evidence="1" type="primary">efp</name>
    <name type="ordered locus">AHA_3227</name>
</gene>
<organism>
    <name type="scientific">Aeromonas hydrophila subsp. hydrophila (strain ATCC 7966 / DSM 30187 / BCRC 13018 / CCUG 14551 / JCM 1027 / KCTC 2358 / NCIMB 9240 / NCTC 8049)</name>
    <dbReference type="NCBI Taxonomy" id="380703"/>
    <lineage>
        <taxon>Bacteria</taxon>
        <taxon>Pseudomonadati</taxon>
        <taxon>Pseudomonadota</taxon>
        <taxon>Gammaproteobacteria</taxon>
        <taxon>Aeromonadales</taxon>
        <taxon>Aeromonadaceae</taxon>
        <taxon>Aeromonas</taxon>
    </lineage>
</organism>
<comment type="function">
    <text evidence="1">Involved in peptide bond synthesis. Stimulates efficient translation and peptide-bond synthesis on native or reconstituted 70S ribosomes in vitro. Probably functions indirectly by altering the affinity of the ribosome for aminoacyl-tRNA, thus increasing their reactivity as acceptors for peptidyl transferase.</text>
</comment>
<comment type="pathway">
    <text evidence="1">Protein biosynthesis; polypeptide chain elongation.</text>
</comment>
<comment type="subcellular location">
    <subcellularLocation>
        <location evidence="1">Cytoplasm</location>
    </subcellularLocation>
</comment>
<comment type="similarity">
    <text evidence="1">Belongs to the elongation factor P family.</text>
</comment>
<name>EFP_AERHH</name>
<evidence type="ECO:0000255" key="1">
    <source>
        <dbReference type="HAMAP-Rule" id="MF_00141"/>
    </source>
</evidence>
<proteinExistence type="inferred from homology"/>